<gene>
    <name type="primary">gal1</name>
</gene>
<accession>P48842</accession>
<organism>
    <name type="scientific">Aspergillus aculeatus</name>
    <dbReference type="NCBI Taxonomy" id="5053"/>
    <lineage>
        <taxon>Eukaryota</taxon>
        <taxon>Fungi</taxon>
        <taxon>Dikarya</taxon>
        <taxon>Ascomycota</taxon>
        <taxon>Pezizomycotina</taxon>
        <taxon>Eurotiomycetes</taxon>
        <taxon>Eurotiomycetidae</taxon>
        <taxon>Eurotiales</taxon>
        <taxon>Aspergillaceae</taxon>
        <taxon>Aspergillus</taxon>
        <taxon>Aspergillus subgen. Circumdati</taxon>
    </lineage>
</organism>
<name>GANA_ASPAC</name>
<proteinExistence type="evidence at protein level"/>
<sequence>MFASLLLAALPLLTHAALTYRGADISSLLLLEDEGYSYKNLNGQTQALETILADAGINSIRQRVWVNPSDGSYDLDYNLELAKRVKAAGMSLYLDLHLSDTWADPSDQTTPSGWSTTDLGTLKWQLYNYTLEVCNTFAENDIDIEIISIGNEIRAGLLWPLGETSSYSNIGALLHSGAWGVKDSNLATTPKIMIHLDDGWSWDQQNYFYETVLATGELLSTDFDYFGVSYYPFYSASATLASLKTSLANLQSTYDKPVVVVETNWPVSCPNPAYAFPSDLSSIPFSVAGQQEFLEKLAAVVEATTDGLGVYYWEPAWIGNAGLGSSCADNLMVDYTTDEVYESIETLGEL</sequence>
<reference key="1">
    <citation type="journal article" date="1995" name="Curr. Genet.">
        <title>Expression cloning, purification and characterization of a beta-1,4-galactanase from Aspergillus aculeatus.</title>
        <authorList>
            <person name="Christgau S."/>
            <person name="Sandal T."/>
            <person name="Kofod L.V."/>
            <person name="Dalboege H."/>
        </authorList>
    </citation>
    <scope>NUCLEOTIDE SEQUENCE [MRNA]</scope>
    <scope>PROTEIN SEQUENCE OF 17-44</scope>
    <source>
        <strain>KSM 510</strain>
    </source>
</reference>
<reference key="2">
    <citation type="journal article" date="2003" name="Protein Sci.">
        <title>Structure of two fungal beta-1,4-galactanases: searching for the basis for temperature and pH optimum.</title>
        <authorList>
            <person name="Le Nours J."/>
            <person name="Ryttersgaard C."/>
            <person name="Lo Leggio L."/>
            <person name="Oestergaard P.R."/>
            <person name="Borchert T.V."/>
            <person name="Christensen L.L.H."/>
            <person name="Larsen S."/>
        </authorList>
    </citation>
    <scope>MUTAGENESIS OF ASP-198</scope>
</reference>
<reference key="3">
    <citation type="journal article" date="2002" name="Biochemistry">
        <title>Aspergillus aculeatus beta-1,4-galactanase: substrate recognition and relations to other glycoside hydrolases in clan GH-A.</title>
        <authorList>
            <person name="Ryttersgaard C."/>
            <person name="Lo Leggio L."/>
            <person name="Coutinho P.M."/>
            <person name="Henrissat B."/>
            <person name="Larsen S."/>
        </authorList>
    </citation>
    <scope>X-RAY CRYSTALLOGRAPHY (1.8 ANGSTROMS)</scope>
</reference>
<feature type="signal peptide" evidence="4">
    <location>
        <begin position="1"/>
        <end position="16"/>
    </location>
</feature>
<feature type="chain" id="PRO_0000012221" description="Arabinogalactan endo-beta-1,4-galactanase">
    <location>
        <begin position="17"/>
        <end position="350"/>
    </location>
</feature>
<feature type="active site" description="Proton donor" evidence="1">
    <location>
        <position position="152"/>
    </location>
</feature>
<feature type="active site" description="Nucleophile" evidence="1">
    <location>
        <position position="262"/>
    </location>
</feature>
<feature type="glycosylation site" description="N-linked (GlcNAc...) asparagine" evidence="2">
    <location>
        <position position="128"/>
    </location>
</feature>
<feature type="mutagenesis site" description="Broadens pH profile by 1 unit towards the basic end of the scale." evidence="3">
    <original>D</original>
    <variation>N</variation>
    <location>
        <position position="198"/>
    </location>
</feature>
<feature type="strand" evidence="6">
    <location>
        <begin position="19"/>
        <end position="24"/>
    </location>
</feature>
<feature type="helix" evidence="6">
    <location>
        <begin position="28"/>
        <end position="33"/>
    </location>
</feature>
<feature type="helix" evidence="6">
    <location>
        <begin position="48"/>
        <end position="55"/>
    </location>
</feature>
<feature type="strand" evidence="6">
    <location>
        <begin position="59"/>
        <end position="64"/>
    </location>
</feature>
<feature type="helix" evidence="6">
    <location>
        <begin position="75"/>
        <end position="87"/>
    </location>
</feature>
<feature type="strand" evidence="6">
    <location>
        <begin position="91"/>
        <end position="96"/>
    </location>
</feature>
<feature type="strand" evidence="6">
    <location>
        <begin position="99"/>
        <end position="101"/>
    </location>
</feature>
<feature type="helix" evidence="6">
    <location>
        <begin position="119"/>
        <end position="139"/>
    </location>
</feature>
<feature type="strand" evidence="6">
    <location>
        <begin position="145"/>
        <end position="152"/>
    </location>
</feature>
<feature type="helix" evidence="6">
    <location>
        <begin position="153"/>
        <end position="155"/>
    </location>
</feature>
<feature type="strand" evidence="6">
    <location>
        <begin position="157"/>
        <end position="159"/>
    </location>
</feature>
<feature type="turn" evidence="6">
    <location>
        <begin position="160"/>
        <end position="162"/>
    </location>
</feature>
<feature type="helix" evidence="6">
    <location>
        <begin position="167"/>
        <end position="182"/>
    </location>
</feature>
<feature type="strand" evidence="6">
    <location>
        <begin position="191"/>
        <end position="197"/>
    </location>
</feature>
<feature type="helix" evidence="6">
    <location>
        <begin position="202"/>
        <end position="214"/>
    </location>
</feature>
<feature type="strand" evidence="6">
    <location>
        <begin position="216"/>
        <end position="218"/>
    </location>
</feature>
<feature type="helix" evidence="6">
    <location>
        <begin position="220"/>
        <end position="222"/>
    </location>
</feature>
<feature type="strand" evidence="6">
    <location>
        <begin position="225"/>
        <end position="229"/>
    </location>
</feature>
<feature type="strand" evidence="6">
    <location>
        <begin position="232"/>
        <end position="234"/>
    </location>
</feature>
<feature type="helix" evidence="6">
    <location>
        <begin position="240"/>
        <end position="254"/>
    </location>
</feature>
<feature type="strand" evidence="6">
    <location>
        <begin position="258"/>
        <end position="262"/>
    </location>
</feature>
<feature type="helix" evidence="6">
    <location>
        <begin position="278"/>
        <end position="280"/>
    </location>
</feature>
<feature type="helix" evidence="6">
    <location>
        <begin position="287"/>
        <end position="302"/>
    </location>
</feature>
<feature type="strand" evidence="6">
    <location>
        <begin position="307"/>
        <end position="313"/>
    </location>
</feature>
<feature type="turn" evidence="6">
    <location>
        <begin position="321"/>
        <end position="324"/>
    </location>
</feature>
<feature type="strand" evidence="6">
    <location>
        <begin position="325"/>
        <end position="329"/>
    </location>
</feature>
<feature type="turn" evidence="6">
    <location>
        <begin position="335"/>
        <end position="337"/>
    </location>
</feature>
<feature type="helix" evidence="6">
    <location>
        <begin position="343"/>
        <end position="348"/>
    </location>
</feature>
<comment type="catalytic activity">
    <reaction>
        <text>The enzyme specifically hydrolyzes (1-&gt;4)-beta-D-galactosidic linkages in type I arabinogalactans.</text>
        <dbReference type="EC" id="3.2.1.89"/>
    </reaction>
</comment>
<comment type="biophysicochemical properties">
    <phDependence>
        <text>Optimum pH is 4.0-4.5.</text>
    </phDependence>
    <temperatureDependence>
        <text>Optimum temperature is 40-65 degrees Celsius.</text>
    </temperatureDependence>
</comment>
<comment type="PTM">
    <text>Glycosylated.</text>
</comment>
<comment type="similarity">
    <text evidence="5">Belongs to the glycosyl hydrolase 53 family.</text>
</comment>
<dbReference type="EC" id="3.2.1.89"/>
<dbReference type="EMBL" id="L34599">
    <property type="protein sequence ID" value="AAA32692.1"/>
    <property type="molecule type" value="mRNA"/>
</dbReference>
<dbReference type="PIR" id="S51494">
    <property type="entry name" value="S51494"/>
</dbReference>
<dbReference type="PDB" id="1FHL">
    <property type="method" value="X-ray"/>
    <property type="resolution" value="2.30 A"/>
    <property type="chains" value="A=17-350"/>
</dbReference>
<dbReference type="PDB" id="1FOB">
    <property type="method" value="X-ray"/>
    <property type="resolution" value="1.80 A"/>
    <property type="chains" value="A=17-350"/>
</dbReference>
<dbReference type="PDB" id="6Q3R">
    <property type="method" value="X-ray"/>
    <property type="resolution" value="2.69 A"/>
    <property type="chains" value="A/B=17-350"/>
</dbReference>
<dbReference type="PDBsum" id="1FHL"/>
<dbReference type="PDBsum" id="1FOB"/>
<dbReference type="PDBsum" id="6Q3R"/>
<dbReference type="SMR" id="P48842"/>
<dbReference type="CAZy" id="GH53">
    <property type="family name" value="Glycoside Hydrolase Family 53"/>
</dbReference>
<dbReference type="GlyCosmos" id="P48842">
    <property type="glycosylation" value="1 site, No reported glycans"/>
</dbReference>
<dbReference type="VEuPathDB" id="FungiDB:ASPACDRAFT_78476"/>
<dbReference type="EvolutionaryTrace" id="P48842"/>
<dbReference type="GO" id="GO:0031218">
    <property type="term" value="F:arabinogalactan endo-1,4-beta-galactosidase activity"/>
    <property type="evidence" value="ECO:0007669"/>
    <property type="project" value="UniProtKB-EC"/>
</dbReference>
<dbReference type="GO" id="GO:0015926">
    <property type="term" value="F:glucosidase activity"/>
    <property type="evidence" value="ECO:0007669"/>
    <property type="project" value="InterPro"/>
</dbReference>
<dbReference type="GO" id="GO:0045490">
    <property type="term" value="P:pectin catabolic process"/>
    <property type="evidence" value="ECO:0007669"/>
    <property type="project" value="TreeGrafter"/>
</dbReference>
<dbReference type="FunFam" id="3.20.20.80:FF:000077">
    <property type="entry name" value="Arabinogalactan endo-beta-1,4-galactanase"/>
    <property type="match status" value="1"/>
</dbReference>
<dbReference type="Gene3D" id="3.20.20.80">
    <property type="entry name" value="Glycosidases"/>
    <property type="match status" value="1"/>
</dbReference>
<dbReference type="InterPro" id="IPR011683">
    <property type="entry name" value="Glyco_hydro_53"/>
</dbReference>
<dbReference type="InterPro" id="IPR017853">
    <property type="entry name" value="Glycoside_hydrolase_SF"/>
</dbReference>
<dbReference type="PANTHER" id="PTHR34983">
    <property type="entry name" value="ARABINOGALACTAN ENDO-BETA-1,4-GALACTANASE A"/>
    <property type="match status" value="1"/>
</dbReference>
<dbReference type="PANTHER" id="PTHR34983:SF1">
    <property type="entry name" value="ARABINOGALACTAN ENDO-BETA-1,4-GALACTANASE A"/>
    <property type="match status" value="1"/>
</dbReference>
<dbReference type="Pfam" id="PF07745">
    <property type="entry name" value="Glyco_hydro_53"/>
    <property type="match status" value="1"/>
</dbReference>
<dbReference type="SUPFAM" id="SSF51445">
    <property type="entry name" value="(Trans)glycosidases"/>
    <property type="match status" value="1"/>
</dbReference>
<protein>
    <recommendedName>
        <fullName>Arabinogalactan endo-beta-1,4-galactanase</fullName>
        <ecNumber>3.2.1.89</ecNumber>
    </recommendedName>
    <alternativeName>
        <fullName>Endo-1,4-beta-galactanase</fullName>
        <shortName>Galactanase</shortName>
    </alternativeName>
</protein>
<evidence type="ECO:0000250" key="1"/>
<evidence type="ECO:0000255" key="2"/>
<evidence type="ECO:0000269" key="3">
    <source>
    </source>
</evidence>
<evidence type="ECO:0000269" key="4">
    <source>
    </source>
</evidence>
<evidence type="ECO:0000305" key="5"/>
<evidence type="ECO:0007829" key="6">
    <source>
        <dbReference type="PDB" id="1FOB"/>
    </source>
</evidence>
<keyword id="KW-0002">3D-structure</keyword>
<keyword id="KW-0903">Direct protein sequencing</keyword>
<keyword id="KW-0325">Glycoprotein</keyword>
<keyword id="KW-0326">Glycosidase</keyword>
<keyword id="KW-0378">Hydrolase</keyword>
<keyword id="KW-0732">Signal</keyword>